<accession>Q68RV0</accession>
<gene>
    <name evidence="1" type="primary">ndhH</name>
    <name type="ORF">PSC1241</name>
</gene>
<organism>
    <name type="scientific">Panax ginseng</name>
    <name type="common">Korean ginseng</name>
    <dbReference type="NCBI Taxonomy" id="4054"/>
    <lineage>
        <taxon>Eukaryota</taxon>
        <taxon>Viridiplantae</taxon>
        <taxon>Streptophyta</taxon>
        <taxon>Embryophyta</taxon>
        <taxon>Tracheophyta</taxon>
        <taxon>Spermatophyta</taxon>
        <taxon>Magnoliopsida</taxon>
        <taxon>eudicotyledons</taxon>
        <taxon>Gunneridae</taxon>
        <taxon>Pentapetalae</taxon>
        <taxon>asterids</taxon>
        <taxon>campanulids</taxon>
        <taxon>Apiales</taxon>
        <taxon>Araliaceae</taxon>
        <taxon>Panax</taxon>
    </lineage>
</organism>
<protein>
    <recommendedName>
        <fullName evidence="1">NAD(P)H-quinone oxidoreductase subunit H, chloroplastic</fullName>
        <ecNumber evidence="1">7.1.1.-</ecNumber>
    </recommendedName>
    <alternativeName>
        <fullName>NAD(P)H dehydrogenase subunit H</fullName>
    </alternativeName>
    <alternativeName>
        <fullName evidence="1">NADH-plastoquinone oxidoreductase 49 kDa subunit</fullName>
    </alternativeName>
    <alternativeName>
        <fullName evidence="1">NADH-plastoquinone oxidoreductase subunit H</fullName>
    </alternativeName>
</protein>
<feature type="chain" id="PRO_0000358017" description="NAD(P)H-quinone oxidoreductase subunit H, chloroplastic">
    <location>
        <begin position="1"/>
        <end position="393"/>
    </location>
</feature>
<geneLocation type="chloroplast"/>
<proteinExistence type="inferred from homology"/>
<dbReference type="EC" id="7.1.1.-" evidence="1"/>
<dbReference type="EMBL" id="AY582139">
    <property type="protein sequence ID" value="AAT98566.1"/>
    <property type="molecule type" value="Genomic_DNA"/>
</dbReference>
<dbReference type="RefSeq" id="YP_087022.1">
    <property type="nucleotide sequence ID" value="NC_006290.1"/>
</dbReference>
<dbReference type="SMR" id="Q68RV0"/>
<dbReference type="GeneID" id="3021573"/>
<dbReference type="GO" id="GO:0009535">
    <property type="term" value="C:chloroplast thylakoid membrane"/>
    <property type="evidence" value="ECO:0007669"/>
    <property type="project" value="UniProtKB-SubCell"/>
</dbReference>
<dbReference type="GO" id="GO:0051287">
    <property type="term" value="F:NAD binding"/>
    <property type="evidence" value="ECO:0007669"/>
    <property type="project" value="InterPro"/>
</dbReference>
<dbReference type="GO" id="GO:0016655">
    <property type="term" value="F:oxidoreductase activity, acting on NAD(P)H, quinone or similar compound as acceptor"/>
    <property type="evidence" value="ECO:0007669"/>
    <property type="project" value="UniProtKB-UniRule"/>
</dbReference>
<dbReference type="GO" id="GO:0048038">
    <property type="term" value="F:quinone binding"/>
    <property type="evidence" value="ECO:0007669"/>
    <property type="project" value="UniProtKB-KW"/>
</dbReference>
<dbReference type="GO" id="GO:0019684">
    <property type="term" value="P:photosynthesis, light reaction"/>
    <property type="evidence" value="ECO:0007669"/>
    <property type="project" value="UniProtKB-UniRule"/>
</dbReference>
<dbReference type="FunFam" id="1.10.645.10:FF:000003">
    <property type="entry name" value="NAD(P)H-quinone oxidoreductase subunit H, chloroplastic"/>
    <property type="match status" value="1"/>
</dbReference>
<dbReference type="Gene3D" id="1.10.645.10">
    <property type="entry name" value="Cytochrome-c3 Hydrogenase, chain B"/>
    <property type="match status" value="1"/>
</dbReference>
<dbReference type="HAMAP" id="MF_01358">
    <property type="entry name" value="NDH1_NuoD"/>
    <property type="match status" value="1"/>
</dbReference>
<dbReference type="InterPro" id="IPR001135">
    <property type="entry name" value="NADH_Q_OxRdtase_suD"/>
</dbReference>
<dbReference type="InterPro" id="IPR014029">
    <property type="entry name" value="NADH_UbQ_OxRdtase_49kDa_CS"/>
</dbReference>
<dbReference type="InterPro" id="IPR022885">
    <property type="entry name" value="NDH1_su_D/H"/>
</dbReference>
<dbReference type="InterPro" id="IPR029014">
    <property type="entry name" value="NiFe-Hase_large"/>
</dbReference>
<dbReference type="NCBIfam" id="NF004739">
    <property type="entry name" value="PRK06075.1"/>
    <property type="match status" value="1"/>
</dbReference>
<dbReference type="NCBIfam" id="NF005649">
    <property type="entry name" value="PRK07415.1"/>
    <property type="match status" value="1"/>
</dbReference>
<dbReference type="PANTHER" id="PTHR11993:SF10">
    <property type="entry name" value="NADH DEHYDROGENASE [UBIQUINONE] IRON-SULFUR PROTEIN 2, MITOCHONDRIAL"/>
    <property type="match status" value="1"/>
</dbReference>
<dbReference type="PANTHER" id="PTHR11993">
    <property type="entry name" value="NADH-UBIQUINONE OXIDOREDUCTASE 49 KDA SUBUNIT"/>
    <property type="match status" value="1"/>
</dbReference>
<dbReference type="Pfam" id="PF00346">
    <property type="entry name" value="Complex1_49kDa"/>
    <property type="match status" value="1"/>
</dbReference>
<dbReference type="SUPFAM" id="SSF56762">
    <property type="entry name" value="HydB/Nqo4-like"/>
    <property type="match status" value="1"/>
</dbReference>
<dbReference type="PROSITE" id="PS00535">
    <property type="entry name" value="COMPLEX1_49K"/>
    <property type="match status" value="1"/>
</dbReference>
<sequence>MTASATRNDLMIVNLGPQHPSMHGVLRLIVTLDGEDVIDCEPILGYLHRGMEKIAENRTIIQYLPYVTRWDYLATMFTEAITVNAPEQLGNIQVPKRASYIRVIMLELSRIASHLLWLGPFLADIGAQTPFFYIFRERELIYDLFEAATGMRMMHNYFRIGGVAADLPHGWIDKCLDFCDFFLTRVTEYQKLITRNPIFLERVEGVGIIGGAEAINWGLSGPMLRASGIQWDLRKVDHYESYDEFDWGVQWQKEGDSLARYLVRISEMTESIKIIQQALEGIPGGPYENLEIRRFDKVRDPEWNDFDYRFISKKPSPTFELSKQELYVRVEAPKGELGIFLIGDRGVFPWRWKIRPPGFINLQILPQLVKRMKLADIMTILGSIDIIMGEVDR</sequence>
<evidence type="ECO:0000255" key="1">
    <source>
        <dbReference type="HAMAP-Rule" id="MF_01358"/>
    </source>
</evidence>
<comment type="function">
    <text evidence="1">NDH shuttles electrons from NAD(P)H:plastoquinone, via FMN and iron-sulfur (Fe-S) centers, to quinones in the photosynthetic chain and possibly in a chloroplast respiratory chain. The immediate electron acceptor for the enzyme in this species is believed to be plastoquinone. Couples the redox reaction to proton translocation, and thus conserves the redox energy in a proton gradient.</text>
</comment>
<comment type="catalytic activity">
    <reaction evidence="1">
        <text>a plastoquinone + NADH + (n+1) H(+)(in) = a plastoquinol + NAD(+) + n H(+)(out)</text>
        <dbReference type="Rhea" id="RHEA:42608"/>
        <dbReference type="Rhea" id="RHEA-COMP:9561"/>
        <dbReference type="Rhea" id="RHEA-COMP:9562"/>
        <dbReference type="ChEBI" id="CHEBI:15378"/>
        <dbReference type="ChEBI" id="CHEBI:17757"/>
        <dbReference type="ChEBI" id="CHEBI:57540"/>
        <dbReference type="ChEBI" id="CHEBI:57945"/>
        <dbReference type="ChEBI" id="CHEBI:62192"/>
    </reaction>
</comment>
<comment type="catalytic activity">
    <reaction evidence="1">
        <text>a plastoquinone + NADPH + (n+1) H(+)(in) = a plastoquinol + NADP(+) + n H(+)(out)</text>
        <dbReference type="Rhea" id="RHEA:42612"/>
        <dbReference type="Rhea" id="RHEA-COMP:9561"/>
        <dbReference type="Rhea" id="RHEA-COMP:9562"/>
        <dbReference type="ChEBI" id="CHEBI:15378"/>
        <dbReference type="ChEBI" id="CHEBI:17757"/>
        <dbReference type="ChEBI" id="CHEBI:57783"/>
        <dbReference type="ChEBI" id="CHEBI:58349"/>
        <dbReference type="ChEBI" id="CHEBI:62192"/>
    </reaction>
</comment>
<comment type="subunit">
    <text evidence="1">NDH is composed of at least 16 different subunits, 5 of which are encoded in the nucleus.</text>
</comment>
<comment type="subcellular location">
    <subcellularLocation>
        <location evidence="1">Plastid</location>
        <location evidence="1">Chloroplast thylakoid membrane</location>
        <topology evidence="1">Peripheral membrane protein</topology>
        <orientation evidence="1">Stromal side</orientation>
    </subcellularLocation>
</comment>
<comment type="similarity">
    <text evidence="1">Belongs to the complex I 49 kDa subunit family.</text>
</comment>
<name>NDHH_PANGI</name>
<keyword id="KW-0150">Chloroplast</keyword>
<keyword id="KW-0472">Membrane</keyword>
<keyword id="KW-0520">NAD</keyword>
<keyword id="KW-0521">NADP</keyword>
<keyword id="KW-0934">Plastid</keyword>
<keyword id="KW-0618">Plastoquinone</keyword>
<keyword id="KW-0874">Quinone</keyword>
<keyword id="KW-0793">Thylakoid</keyword>
<keyword id="KW-1278">Translocase</keyword>
<keyword id="KW-0813">Transport</keyword>
<reference key="1">
    <citation type="journal article" date="2004" name="DNA Res.">
        <title>Complete chloroplast genome sequence from Korea ginseng (Panax schinseng Nees) and comparative analysis of sequence evolution among 17 vascular plants.</title>
        <authorList>
            <person name="Kim K.-J."/>
            <person name="Lee H.-L."/>
        </authorList>
    </citation>
    <scope>NUCLEOTIDE SEQUENCE [LARGE SCALE GENOMIC DNA]</scope>
</reference>